<evidence type="ECO:0000255" key="1"/>
<evidence type="ECO:0000269" key="2">
    <source>
    </source>
</evidence>
<evidence type="ECO:0000303" key="3">
    <source>
    </source>
</evidence>
<evidence type="ECO:0000305" key="4"/>
<evidence type="ECO:0000305" key="5">
    <source>
    </source>
</evidence>
<evidence type="ECO:0000312" key="6">
    <source>
        <dbReference type="EMBL" id="ADC63401.1"/>
    </source>
</evidence>
<comment type="function">
    <text evidence="2">Part of the SoeABC complex that catalyzes the oxidation of sulfite to sulfate. SoeC probably anchors and stabilizes the catalytic subunits.</text>
</comment>
<comment type="subunit">
    <text evidence="5">Forms a heterotrimeric membrane-bound complex composed of a catalytic heterodimer (SoeAB) and a membrane anchor protein (SoeC).</text>
</comment>
<comment type="subcellular location">
    <subcellularLocation>
        <location evidence="5">Cell inner membrane</location>
        <topology evidence="1">Multi-pass membrane protein</topology>
    </subcellularLocation>
</comment>
<comment type="similarity">
    <text evidence="4">Belongs to the DmsC family.</text>
</comment>
<organism>
    <name type="scientific">Allochromatium vinosum (strain ATCC 17899 / DSM 180 / NBRC 103801 / NCIMB 10441 / D)</name>
    <name type="common">Chromatium vinosum</name>
    <dbReference type="NCBI Taxonomy" id="572477"/>
    <lineage>
        <taxon>Bacteria</taxon>
        <taxon>Pseudomonadati</taxon>
        <taxon>Pseudomonadota</taxon>
        <taxon>Gammaproteobacteria</taxon>
        <taxon>Chromatiales</taxon>
        <taxon>Chromatiaceae</taxon>
        <taxon>Allochromatium</taxon>
    </lineage>
</organism>
<keyword id="KW-0997">Cell inner membrane</keyword>
<keyword id="KW-1003">Cell membrane</keyword>
<keyword id="KW-0472">Membrane</keyword>
<keyword id="KW-1185">Reference proteome</keyword>
<keyword id="KW-0812">Transmembrane</keyword>
<keyword id="KW-1133">Transmembrane helix</keyword>
<sequence length="325" mass="35715">MHPAFSVIFLTTLLGAGQGLYLAMVTGQLYAVARFLPAQADQFYAVGSLVALLLLIAGLGASFFHLGRPERAWRAAAMWRTSWLSREVIVLPIVMALVFAYGVAHWFEWTQPLFQVGAALQVDLTLLLGVLGTIASLALFVCTAMIYAAVRFLQEWHTPLTVSNFLFLGAASGFMLAAAYSAYIGNPLVTFYGTWAVILTLVGLASRLAHLRRNARLKHKSTVQTAIGVRHASVVQKAQGATGGSFNTREFFHGRSQSLLERLRTVYLVLVFPIPVLLIGLSYLIGSSNLPIIAFFVQFAGLLIERWSFFAEARHPQNLYYQSVA</sequence>
<reference key="1">
    <citation type="journal article" date="2011" name="Stand. Genomic Sci.">
        <title>Complete genome sequence of Allochromatium vinosum DSM 180(T).</title>
        <authorList>
            <person name="Weissgerber T."/>
            <person name="Zigann R."/>
            <person name="Bruce D."/>
            <person name="Chang Y.J."/>
            <person name="Detter J.C."/>
            <person name="Han C."/>
            <person name="Hauser L."/>
            <person name="Jeffries C.D."/>
            <person name="Land M."/>
            <person name="Munk A.C."/>
            <person name="Tapia R."/>
            <person name="Dahl C."/>
        </authorList>
    </citation>
    <scope>NUCLEOTIDE SEQUENCE [LARGE SCALE GENOMIC DNA]</scope>
    <source>
        <strain>ATCC 17899 / DSM 180 / NBRC 103801 / NCIMB 10441 / D</strain>
    </source>
</reference>
<reference key="2">
    <citation type="journal article" date="2013" name="Microbiology">
        <title>Sulfite oxidation in the purple sulfur bacterium Allochromatium vinosum: identification of SoeABC as a major player and relevance of SoxYZ in the process.</title>
        <authorList>
            <person name="Dahl C."/>
            <person name="Franz B."/>
            <person name="Hensen D."/>
            <person name="Kesselheim A."/>
            <person name="Zigann R."/>
        </authorList>
    </citation>
    <scope>FUNCTION</scope>
    <scope>SUBUNIT</scope>
    <scope>SUBCELLULAR LOCATION</scope>
    <source>
        <strain>ATCC 17899 / DSM 180 / NBRC 103801 / NCIMB 10441 / D</strain>
    </source>
</reference>
<feature type="chain" id="PRO_0000446048" description="Sulfite dehydrogenase subunit C">
    <location>
        <begin position="1"/>
        <end position="325"/>
    </location>
</feature>
<feature type="transmembrane region" description="Helical" evidence="1">
    <location>
        <begin position="5"/>
        <end position="25"/>
    </location>
</feature>
<feature type="transmembrane region" description="Helical" evidence="1">
    <location>
        <begin position="43"/>
        <end position="63"/>
    </location>
</feature>
<feature type="transmembrane region" description="Helical" evidence="1">
    <location>
        <begin position="87"/>
        <end position="107"/>
    </location>
</feature>
<feature type="transmembrane region" description="Helical" evidence="1">
    <location>
        <begin position="126"/>
        <end position="146"/>
    </location>
</feature>
<feature type="transmembrane region" description="Helical" evidence="1">
    <location>
        <begin position="165"/>
        <end position="185"/>
    </location>
</feature>
<feature type="transmembrane region" description="Helical" evidence="1">
    <location>
        <begin position="186"/>
        <end position="206"/>
    </location>
</feature>
<feature type="transmembrane region" description="Helical" evidence="1">
    <location>
        <begin position="266"/>
        <end position="286"/>
    </location>
</feature>
<feature type="transmembrane region" description="Helical" evidence="1">
    <location>
        <begin position="290"/>
        <end position="310"/>
    </location>
</feature>
<dbReference type="EMBL" id="CP001896">
    <property type="protein sequence ID" value="ADC63401.1"/>
    <property type="molecule type" value="Genomic_DNA"/>
</dbReference>
<dbReference type="RefSeq" id="WP_012971671.1">
    <property type="nucleotide sequence ID" value="NC_013851.1"/>
</dbReference>
<dbReference type="STRING" id="572477.Alvin_2489"/>
<dbReference type="KEGG" id="alv:Alvin_2489"/>
<dbReference type="eggNOG" id="COG3302">
    <property type="taxonomic scope" value="Bacteria"/>
</dbReference>
<dbReference type="HOGENOM" id="CLU_077429_0_0_6"/>
<dbReference type="OrthoDB" id="5520897at2"/>
<dbReference type="BioCyc" id="MetaCyc:MONOMER-18523"/>
<dbReference type="BRENDA" id="1.8.5.6">
    <property type="organism ID" value="257"/>
</dbReference>
<dbReference type="Proteomes" id="UP000001441">
    <property type="component" value="Chromosome"/>
</dbReference>
<dbReference type="GO" id="GO:0009390">
    <property type="term" value="C:dimethyl sulfoxide reductase complex"/>
    <property type="evidence" value="ECO:0007669"/>
    <property type="project" value="TreeGrafter"/>
</dbReference>
<dbReference type="GO" id="GO:0005886">
    <property type="term" value="C:plasma membrane"/>
    <property type="evidence" value="ECO:0007669"/>
    <property type="project" value="UniProtKB-SubCell"/>
</dbReference>
<dbReference type="GO" id="GO:0009389">
    <property type="term" value="F:dimethyl sulfoxide reductase activity"/>
    <property type="evidence" value="ECO:0007669"/>
    <property type="project" value="TreeGrafter"/>
</dbReference>
<dbReference type="GO" id="GO:0019645">
    <property type="term" value="P:anaerobic electron transport chain"/>
    <property type="evidence" value="ECO:0007669"/>
    <property type="project" value="InterPro"/>
</dbReference>
<dbReference type="InterPro" id="IPR007059">
    <property type="entry name" value="DmsC"/>
</dbReference>
<dbReference type="PANTHER" id="PTHR38095">
    <property type="entry name" value="ANAEROBIC DIMETHYL SULFOXIDE REDUCTASE CHAIN YNFH"/>
    <property type="match status" value="1"/>
</dbReference>
<dbReference type="PANTHER" id="PTHR38095:SF1">
    <property type="entry name" value="ANAEROBIC DIMETHYL SULFOXIDE REDUCTASE CHAIN YNFH"/>
    <property type="match status" value="1"/>
</dbReference>
<dbReference type="Pfam" id="PF04976">
    <property type="entry name" value="DmsC"/>
    <property type="match status" value="1"/>
</dbReference>
<gene>
    <name evidence="3" type="primary">soeC</name>
    <name evidence="6" type="ordered locus">Alvin_2489</name>
</gene>
<proteinExistence type="evidence at protein level"/>
<protein>
    <recommendedName>
        <fullName evidence="4">Sulfite dehydrogenase subunit C</fullName>
    </recommendedName>
    <alternativeName>
        <fullName evidence="4">Sulfite dehydrogenase membrane anchor subunit</fullName>
    </alternativeName>
    <alternativeName>
        <fullName evidence="4">Sulfite-oxidizing enzyme subunit C</fullName>
    </alternativeName>
</protein>
<name>SOEC_ALLVD</name>
<accession>D3RNN6</accession>